<dbReference type="EMBL" id="AE014299">
    <property type="protein sequence ID" value="AAN56812.1"/>
    <property type="molecule type" value="Genomic_DNA"/>
</dbReference>
<dbReference type="RefSeq" id="NP_719368.1">
    <property type="nucleotide sequence ID" value="NC_004347.2"/>
</dbReference>
<dbReference type="RefSeq" id="WP_011073599.1">
    <property type="nucleotide sequence ID" value="NC_004347.2"/>
</dbReference>
<dbReference type="SMR" id="Q8EAR1"/>
<dbReference type="STRING" id="211586.SO_3835"/>
<dbReference type="PaxDb" id="211586-SO_3835"/>
<dbReference type="KEGG" id="son:SO_3835"/>
<dbReference type="PATRIC" id="fig|211586.12.peg.3723"/>
<dbReference type="eggNOG" id="COG3017">
    <property type="taxonomic scope" value="Bacteria"/>
</dbReference>
<dbReference type="HOGENOM" id="CLU_092816_1_0_6"/>
<dbReference type="OrthoDB" id="9797618at2"/>
<dbReference type="PhylomeDB" id="Q8EAR1"/>
<dbReference type="BioCyc" id="SONE211586:G1GMP-3560-MONOMER"/>
<dbReference type="Proteomes" id="UP000008186">
    <property type="component" value="Chromosome"/>
</dbReference>
<dbReference type="GO" id="GO:0009279">
    <property type="term" value="C:cell outer membrane"/>
    <property type="evidence" value="ECO:0007669"/>
    <property type="project" value="UniProtKB-SubCell"/>
</dbReference>
<dbReference type="GO" id="GO:0044874">
    <property type="term" value="P:lipoprotein localization to outer membrane"/>
    <property type="evidence" value="ECO:0007669"/>
    <property type="project" value="UniProtKB-UniRule"/>
</dbReference>
<dbReference type="GO" id="GO:0015031">
    <property type="term" value="P:protein transport"/>
    <property type="evidence" value="ECO:0007669"/>
    <property type="project" value="UniProtKB-KW"/>
</dbReference>
<dbReference type="CDD" id="cd16326">
    <property type="entry name" value="LolB"/>
    <property type="match status" value="1"/>
</dbReference>
<dbReference type="Gene3D" id="2.50.20.10">
    <property type="entry name" value="Lipoprotein localisation LolA/LolB/LppX"/>
    <property type="match status" value="1"/>
</dbReference>
<dbReference type="HAMAP" id="MF_00233">
    <property type="entry name" value="LolB"/>
    <property type="match status" value="1"/>
</dbReference>
<dbReference type="InterPro" id="IPR029046">
    <property type="entry name" value="LolA/LolB/LppX"/>
</dbReference>
<dbReference type="InterPro" id="IPR004565">
    <property type="entry name" value="OM_lipoprot_LolB"/>
</dbReference>
<dbReference type="NCBIfam" id="TIGR00548">
    <property type="entry name" value="lolB"/>
    <property type="match status" value="1"/>
</dbReference>
<dbReference type="Pfam" id="PF03550">
    <property type="entry name" value="LolB"/>
    <property type="match status" value="1"/>
</dbReference>
<dbReference type="SUPFAM" id="SSF89392">
    <property type="entry name" value="Prokaryotic lipoproteins and lipoprotein localization factors"/>
    <property type="match status" value="1"/>
</dbReference>
<dbReference type="PROSITE" id="PS51257">
    <property type="entry name" value="PROKAR_LIPOPROTEIN"/>
    <property type="match status" value="1"/>
</dbReference>
<organism>
    <name type="scientific">Shewanella oneidensis (strain ATCC 700550 / JCM 31522 / CIP 106686 / LMG 19005 / NCIMB 14063 / MR-1)</name>
    <dbReference type="NCBI Taxonomy" id="211586"/>
    <lineage>
        <taxon>Bacteria</taxon>
        <taxon>Pseudomonadati</taxon>
        <taxon>Pseudomonadota</taxon>
        <taxon>Gammaproteobacteria</taxon>
        <taxon>Alteromonadales</taxon>
        <taxon>Shewanellaceae</taxon>
        <taxon>Shewanella</taxon>
    </lineage>
</organism>
<name>LOLB_SHEON</name>
<proteinExistence type="inferred from homology"/>
<comment type="function">
    <text evidence="1">Plays a critical role in the incorporation of lipoproteins in the outer membrane after they are released by the LolA protein.</text>
</comment>
<comment type="subunit">
    <text evidence="1">Monomer.</text>
</comment>
<comment type="subcellular location">
    <subcellularLocation>
        <location evidence="1">Cell outer membrane</location>
        <topology evidence="1">Lipid-anchor</topology>
    </subcellularLocation>
</comment>
<comment type="similarity">
    <text evidence="1">Belongs to the LolB family.</text>
</comment>
<reference key="1">
    <citation type="journal article" date="2002" name="Nat. Biotechnol.">
        <title>Genome sequence of the dissimilatory metal ion-reducing bacterium Shewanella oneidensis.</title>
        <authorList>
            <person name="Heidelberg J.F."/>
            <person name="Paulsen I.T."/>
            <person name="Nelson K.E."/>
            <person name="Gaidos E.J."/>
            <person name="Nelson W.C."/>
            <person name="Read T.D."/>
            <person name="Eisen J.A."/>
            <person name="Seshadri R."/>
            <person name="Ward N.L."/>
            <person name="Methe B.A."/>
            <person name="Clayton R.A."/>
            <person name="Meyer T."/>
            <person name="Tsapin A."/>
            <person name="Scott J."/>
            <person name="Beanan M.J."/>
            <person name="Brinkac L.M."/>
            <person name="Daugherty S.C."/>
            <person name="DeBoy R.T."/>
            <person name="Dodson R.J."/>
            <person name="Durkin A.S."/>
            <person name="Haft D.H."/>
            <person name="Kolonay J.F."/>
            <person name="Madupu R."/>
            <person name="Peterson J.D."/>
            <person name="Umayam L.A."/>
            <person name="White O."/>
            <person name="Wolf A.M."/>
            <person name="Vamathevan J.J."/>
            <person name="Weidman J.F."/>
            <person name="Impraim M."/>
            <person name="Lee K."/>
            <person name="Berry K.J."/>
            <person name="Lee C."/>
            <person name="Mueller J."/>
            <person name="Khouri H.M."/>
            <person name="Gill J."/>
            <person name="Utterback T.R."/>
            <person name="McDonald L.A."/>
            <person name="Feldblyum T.V."/>
            <person name="Smith H.O."/>
            <person name="Venter J.C."/>
            <person name="Nealson K.H."/>
            <person name="Fraser C.M."/>
        </authorList>
    </citation>
    <scope>NUCLEOTIDE SEQUENCE [LARGE SCALE GENOMIC DNA]</scope>
    <source>
        <strain>ATCC 700550 / JCM 31522 / CIP 106686 / LMG 19005 / NCIMB 14063 / MR-1</strain>
    </source>
</reference>
<sequence length="214" mass="23701">MNNLKRFTKSIFSCIALSGLLFLGGCETLPPMTDLSPITVDNAAQAKAWELQGKLAIRTPEDKLSANLYWRHSEERDELTLTTMLGTTVLTLEATPNSAHLHIDGKDFRDTNAQALLERVSGWSIPINDLPLWITGQIGSLDRVIAVDSAGQAKQLQNMQTPPPWLVTFLSWQSQSGAKVPYQLTLERGDLQLKLQLNQWQALGKPSILLGEKP</sequence>
<gene>
    <name evidence="1" type="primary">lolB</name>
    <name type="ordered locus">SO_3835</name>
</gene>
<accession>Q8EAR1</accession>
<protein>
    <recommendedName>
        <fullName evidence="1">Outer-membrane lipoprotein LolB</fullName>
    </recommendedName>
</protein>
<keyword id="KW-0998">Cell outer membrane</keyword>
<keyword id="KW-0143">Chaperone</keyword>
<keyword id="KW-0449">Lipoprotein</keyword>
<keyword id="KW-0472">Membrane</keyword>
<keyword id="KW-0564">Palmitate</keyword>
<keyword id="KW-0653">Protein transport</keyword>
<keyword id="KW-1185">Reference proteome</keyword>
<keyword id="KW-0732">Signal</keyword>
<keyword id="KW-0813">Transport</keyword>
<evidence type="ECO:0000255" key="1">
    <source>
        <dbReference type="HAMAP-Rule" id="MF_00233"/>
    </source>
</evidence>
<feature type="signal peptide" evidence="1">
    <location>
        <begin position="1"/>
        <end position="25"/>
    </location>
</feature>
<feature type="chain" id="PRO_0000018312" description="Outer-membrane lipoprotein LolB">
    <location>
        <begin position="26"/>
        <end position="214"/>
    </location>
</feature>
<feature type="lipid moiety-binding region" description="N-palmitoyl cysteine" evidence="1">
    <location>
        <position position="26"/>
    </location>
</feature>
<feature type="lipid moiety-binding region" description="S-diacylglycerol cysteine" evidence="1">
    <location>
        <position position="26"/>
    </location>
</feature>